<protein>
    <recommendedName>
        <fullName evidence="1">8-amino-7-oxononanoate synthase</fullName>
        <shortName evidence="1">AONS</shortName>
        <ecNumber evidence="1">2.3.1.47</ecNumber>
    </recommendedName>
    <alternativeName>
        <fullName evidence="1">7-keto-8-amino-pelargonic acid synthase</fullName>
        <shortName evidence="1">7-KAP synthase</shortName>
        <shortName evidence="1">KAPA synthase</shortName>
    </alternativeName>
    <alternativeName>
        <fullName evidence="1">8-amino-7-ketopelargonate synthase</fullName>
    </alternativeName>
</protein>
<dbReference type="EC" id="2.3.1.47" evidence="1"/>
<dbReference type="EMBL" id="BA000031">
    <property type="protein sequence ID" value="BAC59377.1"/>
    <property type="status" value="ALT_INIT"/>
    <property type="molecule type" value="Genomic_DNA"/>
</dbReference>
<dbReference type="RefSeq" id="NP_797493.1">
    <property type="nucleotide sequence ID" value="NC_004603.1"/>
</dbReference>
<dbReference type="RefSeq" id="WP_005460056.1">
    <property type="nucleotide sequence ID" value="NC_004603.1"/>
</dbReference>
<dbReference type="SMR" id="Q87QN5"/>
<dbReference type="GeneID" id="1188619"/>
<dbReference type="KEGG" id="vpa:VP1114"/>
<dbReference type="PATRIC" id="fig|223926.6.peg.1056"/>
<dbReference type="eggNOG" id="COG0156">
    <property type="taxonomic scope" value="Bacteria"/>
</dbReference>
<dbReference type="HOGENOM" id="CLU_015846_11_2_6"/>
<dbReference type="UniPathway" id="UPA00078"/>
<dbReference type="Proteomes" id="UP000002493">
    <property type="component" value="Chromosome 1"/>
</dbReference>
<dbReference type="GO" id="GO:0008710">
    <property type="term" value="F:8-amino-7-oxononanoate synthase activity"/>
    <property type="evidence" value="ECO:0007669"/>
    <property type="project" value="UniProtKB-UniRule"/>
</dbReference>
<dbReference type="GO" id="GO:0030170">
    <property type="term" value="F:pyridoxal phosphate binding"/>
    <property type="evidence" value="ECO:0007669"/>
    <property type="project" value="UniProtKB-UniRule"/>
</dbReference>
<dbReference type="GO" id="GO:0009102">
    <property type="term" value="P:biotin biosynthetic process"/>
    <property type="evidence" value="ECO:0007669"/>
    <property type="project" value="UniProtKB-UniRule"/>
</dbReference>
<dbReference type="CDD" id="cd06454">
    <property type="entry name" value="KBL_like"/>
    <property type="match status" value="1"/>
</dbReference>
<dbReference type="Gene3D" id="3.90.1150.10">
    <property type="entry name" value="Aspartate Aminotransferase, domain 1"/>
    <property type="match status" value="1"/>
</dbReference>
<dbReference type="Gene3D" id="3.40.640.10">
    <property type="entry name" value="Type I PLP-dependent aspartate aminotransferase-like (Major domain)"/>
    <property type="match status" value="1"/>
</dbReference>
<dbReference type="HAMAP" id="MF_01693">
    <property type="entry name" value="BioF_aminotrans_2"/>
    <property type="match status" value="1"/>
</dbReference>
<dbReference type="InterPro" id="IPR001917">
    <property type="entry name" value="Aminotrans_II_pyridoxalP_BS"/>
</dbReference>
<dbReference type="InterPro" id="IPR004839">
    <property type="entry name" value="Aminotransferase_I/II_large"/>
</dbReference>
<dbReference type="InterPro" id="IPR050087">
    <property type="entry name" value="AON_synthase_class-II"/>
</dbReference>
<dbReference type="InterPro" id="IPR004723">
    <property type="entry name" value="AONS_Archaea/Proteobacteria"/>
</dbReference>
<dbReference type="InterPro" id="IPR022834">
    <property type="entry name" value="AONS_Proteobacteria"/>
</dbReference>
<dbReference type="InterPro" id="IPR015424">
    <property type="entry name" value="PyrdxlP-dep_Trfase"/>
</dbReference>
<dbReference type="InterPro" id="IPR015421">
    <property type="entry name" value="PyrdxlP-dep_Trfase_major"/>
</dbReference>
<dbReference type="InterPro" id="IPR015422">
    <property type="entry name" value="PyrdxlP-dep_Trfase_small"/>
</dbReference>
<dbReference type="NCBIfam" id="TIGR00858">
    <property type="entry name" value="bioF"/>
    <property type="match status" value="1"/>
</dbReference>
<dbReference type="PANTHER" id="PTHR13693:SF100">
    <property type="entry name" value="8-AMINO-7-OXONONANOATE SYNTHASE"/>
    <property type="match status" value="1"/>
</dbReference>
<dbReference type="PANTHER" id="PTHR13693">
    <property type="entry name" value="CLASS II AMINOTRANSFERASE/8-AMINO-7-OXONONANOATE SYNTHASE"/>
    <property type="match status" value="1"/>
</dbReference>
<dbReference type="Pfam" id="PF00155">
    <property type="entry name" value="Aminotran_1_2"/>
    <property type="match status" value="1"/>
</dbReference>
<dbReference type="SUPFAM" id="SSF53383">
    <property type="entry name" value="PLP-dependent transferases"/>
    <property type="match status" value="1"/>
</dbReference>
<dbReference type="PROSITE" id="PS00599">
    <property type="entry name" value="AA_TRANSFER_CLASS_2"/>
    <property type="match status" value="1"/>
</dbReference>
<keyword id="KW-0093">Biotin biosynthesis</keyword>
<keyword id="KW-0663">Pyridoxal phosphate</keyword>
<keyword id="KW-0808">Transferase</keyword>
<reference key="1">
    <citation type="journal article" date="2003" name="Lancet">
        <title>Genome sequence of Vibrio parahaemolyticus: a pathogenic mechanism distinct from that of V. cholerae.</title>
        <authorList>
            <person name="Makino K."/>
            <person name="Oshima K."/>
            <person name="Kurokawa K."/>
            <person name="Yokoyama K."/>
            <person name="Uda T."/>
            <person name="Tagomori K."/>
            <person name="Iijima Y."/>
            <person name="Najima M."/>
            <person name="Nakano M."/>
            <person name="Yamashita A."/>
            <person name="Kubota Y."/>
            <person name="Kimura S."/>
            <person name="Yasunaga T."/>
            <person name="Honda T."/>
            <person name="Shinagawa H."/>
            <person name="Hattori M."/>
            <person name="Iida T."/>
        </authorList>
    </citation>
    <scope>NUCLEOTIDE SEQUENCE [LARGE SCALE GENOMIC DNA]</scope>
    <source>
        <strain>RIMD 2210633</strain>
    </source>
</reference>
<feature type="chain" id="PRO_0000381136" description="8-amino-7-oxononanoate synthase">
    <location>
        <begin position="1"/>
        <end position="383"/>
    </location>
</feature>
<feature type="binding site" evidence="1">
    <location>
        <position position="22"/>
    </location>
    <ligand>
        <name>substrate</name>
    </ligand>
</feature>
<feature type="binding site" evidence="1">
    <location>
        <begin position="109"/>
        <end position="110"/>
    </location>
    <ligand>
        <name>pyridoxal 5'-phosphate</name>
        <dbReference type="ChEBI" id="CHEBI:597326"/>
    </ligand>
</feature>
<feature type="binding site" evidence="1">
    <location>
        <position position="134"/>
    </location>
    <ligand>
        <name>substrate</name>
    </ligand>
</feature>
<feature type="binding site" evidence="1">
    <location>
        <position position="178"/>
    </location>
    <ligand>
        <name>pyridoxal 5'-phosphate</name>
        <dbReference type="ChEBI" id="CHEBI:597326"/>
    </ligand>
</feature>
<feature type="binding site" evidence="1">
    <location>
        <position position="206"/>
    </location>
    <ligand>
        <name>pyridoxal 5'-phosphate</name>
        <dbReference type="ChEBI" id="CHEBI:597326"/>
    </ligand>
</feature>
<feature type="binding site" evidence="1">
    <location>
        <position position="232"/>
    </location>
    <ligand>
        <name>pyridoxal 5'-phosphate</name>
        <dbReference type="ChEBI" id="CHEBI:597326"/>
    </ligand>
</feature>
<feature type="binding site" evidence="1">
    <location>
        <position position="348"/>
    </location>
    <ligand>
        <name>substrate</name>
    </ligand>
</feature>
<feature type="modified residue" description="N6-(pyridoxal phosphate)lysine" evidence="1">
    <location>
        <position position="235"/>
    </location>
</feature>
<organism>
    <name type="scientific">Vibrio parahaemolyticus serotype O3:K6 (strain RIMD 2210633)</name>
    <dbReference type="NCBI Taxonomy" id="223926"/>
    <lineage>
        <taxon>Bacteria</taxon>
        <taxon>Pseudomonadati</taxon>
        <taxon>Pseudomonadota</taxon>
        <taxon>Gammaproteobacteria</taxon>
        <taxon>Vibrionales</taxon>
        <taxon>Vibrionaceae</taxon>
        <taxon>Vibrio</taxon>
    </lineage>
</organism>
<gene>
    <name evidence="1" type="primary">bioF</name>
    <name type="ordered locus">VP1114</name>
</gene>
<sequence>MPAFKSRIESALAARKAQGLNRSMNVVFAGNQSILEHEGRRYINFSSNDYLGLANDQALVRAWQQGLSVYGSGSGASPMVTGFSAAHSNLEAALTEWLGFERAILFGSGFSANQALLFTLLEKSDVLIQDRLNHASLMEAGALSTAKMKRFKHNDIKHLETLFTNEGNHLVVTEGVFSMDGDCAPLKDIAEVARLRNAWLAVDDAHGIGVLGEAGGGSCELANVKPEILVVTFGKAFGMSGAAILCDQATGDFLTQFARHHVYSTAMPPAQAYALTHAVSMIQEQSWRREKLVELNEVYQTNLSDLDGFVETDTPIKPFVIGESELALQVANACRQNGIWVTAIRPPTVPKGTSRLRITLTANHSTEQVKTLSIALKQALGAL</sequence>
<proteinExistence type="inferred from homology"/>
<evidence type="ECO:0000255" key="1">
    <source>
        <dbReference type="HAMAP-Rule" id="MF_01693"/>
    </source>
</evidence>
<evidence type="ECO:0000305" key="2"/>
<comment type="function">
    <text evidence="1">Catalyzes the decarboxylative condensation of pimeloyl-[acyl-carrier protein] and L-alanine to produce 8-amino-7-oxononanoate (AON), [acyl-carrier protein], and carbon dioxide.</text>
</comment>
<comment type="catalytic activity">
    <reaction evidence="1">
        <text>6-carboxyhexanoyl-[ACP] + L-alanine + H(+) = (8S)-8-amino-7-oxononanoate + holo-[ACP] + CO2</text>
        <dbReference type="Rhea" id="RHEA:42288"/>
        <dbReference type="Rhea" id="RHEA-COMP:9685"/>
        <dbReference type="Rhea" id="RHEA-COMP:9955"/>
        <dbReference type="ChEBI" id="CHEBI:15378"/>
        <dbReference type="ChEBI" id="CHEBI:16526"/>
        <dbReference type="ChEBI" id="CHEBI:57972"/>
        <dbReference type="ChEBI" id="CHEBI:64479"/>
        <dbReference type="ChEBI" id="CHEBI:78846"/>
        <dbReference type="ChEBI" id="CHEBI:149468"/>
        <dbReference type="EC" id="2.3.1.47"/>
    </reaction>
</comment>
<comment type="cofactor">
    <cofactor evidence="1">
        <name>pyridoxal 5'-phosphate</name>
        <dbReference type="ChEBI" id="CHEBI:597326"/>
    </cofactor>
</comment>
<comment type="pathway">
    <text evidence="1">Cofactor biosynthesis; biotin biosynthesis.</text>
</comment>
<comment type="subunit">
    <text evidence="1">Homodimer.</text>
</comment>
<comment type="similarity">
    <text evidence="1">Belongs to the class-II pyridoxal-phosphate-dependent aminotransferase family. BioF subfamily.</text>
</comment>
<comment type="sequence caution" evidence="2">
    <conflict type="erroneous initiation">
        <sequence resource="EMBL-CDS" id="BAC59377"/>
    </conflict>
</comment>
<accession>Q87QN5</accession>
<name>BIOF_VIBPA</name>